<keyword id="KW-0032">Aminotransferase</keyword>
<keyword id="KW-0663">Pyridoxal phosphate</keyword>
<keyword id="KW-0808">Transferase</keyword>
<evidence type="ECO:0000255" key="1">
    <source>
        <dbReference type="HAMAP-Rule" id="MF_01276"/>
    </source>
</evidence>
<evidence type="ECO:0000305" key="2"/>
<protein>
    <recommendedName>
        <fullName evidence="1">Putrescine aminotransferase</fullName>
        <shortName evidence="1">PAT</shortName>
        <shortName evidence="1">PATase</shortName>
        <ecNumber evidence="1">2.6.1.82</ecNumber>
    </recommendedName>
    <alternativeName>
        <fullName evidence="1">Cadaverine transaminase</fullName>
    </alternativeName>
    <alternativeName>
        <fullName evidence="1">Diamine transaminase</fullName>
        <ecNumber evidence="1">2.6.1.29</ecNumber>
    </alternativeName>
    <alternativeName>
        <fullName evidence="1">Putrescine transaminase</fullName>
    </alternativeName>
    <alternativeName>
        <fullName evidence="1">Putrescine--2-oxoglutaric acid transaminase</fullName>
    </alternativeName>
</protein>
<name>PAT_ECOSM</name>
<accession>B1LF65</accession>
<sequence>MNRLPSSASALACSAHALNLIEKRTLDHEEMKALNREVIEYFKEHVNPGFLEYRKSVTAGGDYGAVEWQAGGLNTLVDTQGQEFIDCLGGFGIFNVGHRNPVVVSAVQNQLAKQPLHSQELLDPLRAMLAKTLAALTPGKLKYSFFCNSGTESVEAALKLAKAYQSPRGKFTFIATSGAFHGKSLGALSATAKSTFRKPFMPLLPGFRHVPFGNIEAMRTALSECKKTGDDVAAVILEPIQGEGGVILPPPGYLTAVRKLCDEFGALMILDEVQTGMGRTGKMFACEHENVQPDILCLAKALGGGVMPIGATIATEEVFSVLFDNPFLHTTTFGGNPLACAAALATINVLLEQNLPAQAEQKGDMLLDGFRQLAREYPDLVQEARGKGMLMAIEFVDNEIGYNFASEMFRQRVLVAGTLNNAKTIRIEPPLTLTIEQCEQVIKAARKALAAIRVSVEEA</sequence>
<feature type="chain" id="PRO_0000379557" description="Putrescine aminotransferase">
    <location>
        <begin position="1"/>
        <end position="459"/>
    </location>
</feature>
<feature type="binding site" description="in other chain" evidence="1">
    <location>
        <begin position="150"/>
        <end position="151"/>
    </location>
    <ligand>
        <name>pyridoxal 5'-phosphate</name>
        <dbReference type="ChEBI" id="CHEBI:597326"/>
        <note>ligand shared between dimeric partners</note>
    </ligand>
</feature>
<feature type="binding site" description="in other chain" evidence="1">
    <location>
        <position position="274"/>
    </location>
    <ligand>
        <name>pyridoxal 5'-phosphate</name>
        <dbReference type="ChEBI" id="CHEBI:597326"/>
        <note>ligand shared between dimeric partners</note>
    </ligand>
</feature>
<feature type="binding site" evidence="1">
    <location>
        <position position="332"/>
    </location>
    <ligand>
        <name>pyridoxal 5'-phosphate</name>
        <dbReference type="ChEBI" id="CHEBI:597326"/>
        <note>ligand shared between dimeric partners</note>
    </ligand>
</feature>
<feature type="modified residue" description="N6-(pyridoxal phosphate)lysine" evidence="1">
    <location>
        <position position="300"/>
    </location>
</feature>
<reference key="1">
    <citation type="journal article" date="2008" name="J. Bacteriol.">
        <title>Insights into the environmental resistance gene pool from the genome sequence of the multidrug-resistant environmental isolate Escherichia coli SMS-3-5.</title>
        <authorList>
            <person name="Fricke W.F."/>
            <person name="Wright M.S."/>
            <person name="Lindell A.H."/>
            <person name="Harkins D.M."/>
            <person name="Baker-Austin C."/>
            <person name="Ravel J."/>
            <person name="Stepanauskas R."/>
        </authorList>
    </citation>
    <scope>NUCLEOTIDE SEQUENCE [LARGE SCALE GENOMIC DNA]</scope>
    <source>
        <strain>SMS-3-5 / SECEC</strain>
    </source>
</reference>
<dbReference type="EC" id="2.6.1.82" evidence="1"/>
<dbReference type="EC" id="2.6.1.29" evidence="1"/>
<dbReference type="EMBL" id="CP000970">
    <property type="protein sequence ID" value="ACB17060.1"/>
    <property type="status" value="ALT_INIT"/>
    <property type="molecule type" value="Genomic_DNA"/>
</dbReference>
<dbReference type="SMR" id="B1LF65"/>
<dbReference type="KEGG" id="ecm:EcSMS35_3367"/>
<dbReference type="HOGENOM" id="CLU_016922_10_0_6"/>
<dbReference type="UniPathway" id="UPA00188">
    <property type="reaction ID" value="UER00290"/>
</dbReference>
<dbReference type="Proteomes" id="UP000007011">
    <property type="component" value="Chromosome"/>
</dbReference>
<dbReference type="GO" id="GO:0019161">
    <property type="term" value="F:diamine transaminase activity"/>
    <property type="evidence" value="ECO:0007669"/>
    <property type="project" value="UniProtKB-EC"/>
</dbReference>
<dbReference type="GO" id="GO:0042802">
    <property type="term" value="F:identical protein binding"/>
    <property type="evidence" value="ECO:0007669"/>
    <property type="project" value="TreeGrafter"/>
</dbReference>
<dbReference type="GO" id="GO:0033094">
    <property type="term" value="F:putrescine--2-oxoglutarate transaminase activity"/>
    <property type="evidence" value="ECO:0007669"/>
    <property type="project" value="UniProtKB-UniRule"/>
</dbReference>
<dbReference type="GO" id="GO:0030170">
    <property type="term" value="F:pyridoxal phosphate binding"/>
    <property type="evidence" value="ECO:0007669"/>
    <property type="project" value="UniProtKB-UniRule"/>
</dbReference>
<dbReference type="GO" id="GO:0019477">
    <property type="term" value="P:L-lysine catabolic process"/>
    <property type="evidence" value="ECO:0007669"/>
    <property type="project" value="UniProtKB-UniRule"/>
</dbReference>
<dbReference type="GO" id="GO:0009447">
    <property type="term" value="P:putrescine catabolic process"/>
    <property type="evidence" value="ECO:0007669"/>
    <property type="project" value="UniProtKB-UniRule"/>
</dbReference>
<dbReference type="CDD" id="cd00610">
    <property type="entry name" value="OAT_like"/>
    <property type="match status" value="1"/>
</dbReference>
<dbReference type="FunFam" id="3.40.640.10:FF:000004">
    <property type="entry name" value="Acetylornithine aminotransferase"/>
    <property type="match status" value="1"/>
</dbReference>
<dbReference type="Gene3D" id="3.90.1150.10">
    <property type="entry name" value="Aspartate Aminotransferase, domain 1"/>
    <property type="match status" value="1"/>
</dbReference>
<dbReference type="Gene3D" id="3.40.640.10">
    <property type="entry name" value="Type I PLP-dependent aspartate aminotransferase-like (Major domain)"/>
    <property type="match status" value="1"/>
</dbReference>
<dbReference type="HAMAP" id="MF_01276">
    <property type="entry name" value="Putres_aminotrans_3"/>
    <property type="match status" value="1"/>
</dbReference>
<dbReference type="InterPro" id="IPR005814">
    <property type="entry name" value="Aminotrans_3"/>
</dbReference>
<dbReference type="InterPro" id="IPR049704">
    <property type="entry name" value="Aminotrans_3_PPA_site"/>
</dbReference>
<dbReference type="InterPro" id="IPR050103">
    <property type="entry name" value="Class-III_PLP-dep_AT"/>
</dbReference>
<dbReference type="InterPro" id="IPR017747">
    <property type="entry name" value="Putrescine_aminotransferase"/>
</dbReference>
<dbReference type="InterPro" id="IPR015424">
    <property type="entry name" value="PyrdxlP-dep_Trfase"/>
</dbReference>
<dbReference type="InterPro" id="IPR015421">
    <property type="entry name" value="PyrdxlP-dep_Trfase_major"/>
</dbReference>
<dbReference type="InterPro" id="IPR015422">
    <property type="entry name" value="PyrdxlP-dep_Trfase_small"/>
</dbReference>
<dbReference type="NCBIfam" id="NF008570">
    <property type="entry name" value="PRK11522.1"/>
    <property type="match status" value="1"/>
</dbReference>
<dbReference type="NCBIfam" id="TIGR03372">
    <property type="entry name" value="putres_am_tran"/>
    <property type="match status" value="1"/>
</dbReference>
<dbReference type="PANTHER" id="PTHR11986">
    <property type="entry name" value="AMINOTRANSFERASE CLASS III"/>
    <property type="match status" value="1"/>
</dbReference>
<dbReference type="PANTHER" id="PTHR11986:SF112">
    <property type="entry name" value="PUTRESCINE AMINOTRANSFERASE"/>
    <property type="match status" value="1"/>
</dbReference>
<dbReference type="Pfam" id="PF00202">
    <property type="entry name" value="Aminotran_3"/>
    <property type="match status" value="1"/>
</dbReference>
<dbReference type="PIRSF" id="PIRSF000521">
    <property type="entry name" value="Transaminase_4ab_Lys_Orn"/>
    <property type="match status" value="1"/>
</dbReference>
<dbReference type="SUPFAM" id="SSF53383">
    <property type="entry name" value="PLP-dependent transferases"/>
    <property type="match status" value="1"/>
</dbReference>
<dbReference type="PROSITE" id="PS00600">
    <property type="entry name" value="AA_TRANSFER_CLASS_3"/>
    <property type="match status" value="1"/>
</dbReference>
<comment type="function">
    <text evidence="1">Catalyzes the aminotransferase reaction from putrescine to 2-oxoglutarate, leading to glutamate and 4-aminobutanal, which spontaneously cyclizes to form 1-pyrroline. This is the first step in one of two pathways for putrescine degradation, where putrescine is converted into 4-aminobutanoate (gamma-aminobutyrate or GABA) via 4-aminobutanal. Also functions as a cadaverine transaminase in a a L-lysine degradation pathway to succinate that proceeds via cadaverine, glutarate and L-2-hydroxyglutarate.</text>
</comment>
<comment type="catalytic activity">
    <reaction evidence="1">
        <text>an alkane-alpha,omega-diamine + 2-oxoglutarate = an omega-aminoaldehyde + L-glutamate</text>
        <dbReference type="Rhea" id="RHEA:18217"/>
        <dbReference type="Rhea" id="RHEA-COMP:9766"/>
        <dbReference type="Rhea" id="RHEA-COMP:12750"/>
        <dbReference type="ChEBI" id="CHEBI:16810"/>
        <dbReference type="ChEBI" id="CHEBI:29985"/>
        <dbReference type="ChEBI" id="CHEBI:70977"/>
        <dbReference type="ChEBI" id="CHEBI:133427"/>
        <dbReference type="EC" id="2.6.1.29"/>
    </reaction>
    <physiologicalReaction direction="left-to-right" evidence="1">
        <dbReference type="Rhea" id="RHEA:18218"/>
    </physiologicalReaction>
</comment>
<comment type="catalytic activity">
    <reaction evidence="1">
        <text>putrescine + 2-oxoglutarate = 1-pyrroline + L-glutamate + H2O</text>
        <dbReference type="Rhea" id="RHEA:12268"/>
        <dbReference type="ChEBI" id="CHEBI:15377"/>
        <dbReference type="ChEBI" id="CHEBI:16810"/>
        <dbReference type="ChEBI" id="CHEBI:29985"/>
        <dbReference type="ChEBI" id="CHEBI:36781"/>
        <dbReference type="ChEBI" id="CHEBI:326268"/>
        <dbReference type="EC" id="2.6.1.82"/>
    </reaction>
    <physiologicalReaction direction="left-to-right" evidence="1">
        <dbReference type="Rhea" id="RHEA:12269"/>
    </physiologicalReaction>
</comment>
<comment type="catalytic activity">
    <reaction evidence="1">
        <text>cadaverine + 2-oxoglutarate = 5-aminopentanal + L-glutamate</text>
        <dbReference type="Rhea" id="RHEA:61624"/>
        <dbReference type="ChEBI" id="CHEBI:16810"/>
        <dbReference type="ChEBI" id="CHEBI:29985"/>
        <dbReference type="ChEBI" id="CHEBI:58384"/>
        <dbReference type="ChEBI" id="CHEBI:144896"/>
    </reaction>
    <physiologicalReaction direction="left-to-right" evidence="1">
        <dbReference type="Rhea" id="RHEA:61625"/>
    </physiologicalReaction>
</comment>
<comment type="cofactor">
    <cofactor evidence="1">
        <name>pyridoxal 5'-phosphate</name>
        <dbReference type="ChEBI" id="CHEBI:597326"/>
    </cofactor>
</comment>
<comment type="pathway">
    <text evidence="1">Amine and polyamine degradation; putrescine degradation; 4-aminobutanal from putrescine (transaminase route): step 1/1.</text>
</comment>
<comment type="similarity">
    <text evidence="1">Belongs to the class-III pyridoxal-phosphate-dependent aminotransferase family. Putrescine aminotransferase subfamily.</text>
</comment>
<comment type="sequence caution" evidence="2">
    <conflict type="erroneous initiation">
        <sequence resource="EMBL-CDS" id="ACB17060"/>
    </conflict>
</comment>
<organism>
    <name type="scientific">Escherichia coli (strain SMS-3-5 / SECEC)</name>
    <dbReference type="NCBI Taxonomy" id="439855"/>
    <lineage>
        <taxon>Bacteria</taxon>
        <taxon>Pseudomonadati</taxon>
        <taxon>Pseudomonadota</taxon>
        <taxon>Gammaproteobacteria</taxon>
        <taxon>Enterobacterales</taxon>
        <taxon>Enterobacteriaceae</taxon>
        <taxon>Escherichia</taxon>
    </lineage>
</organism>
<gene>
    <name evidence="1" type="primary">patA</name>
    <name type="ordered locus">EcSMS35_3367</name>
</gene>
<proteinExistence type="inferred from homology"/>